<evidence type="ECO:0000250" key="1"/>
<evidence type="ECO:0000255" key="2"/>
<evidence type="ECO:0000305" key="3"/>
<keyword id="KW-0249">Electron transport</keyword>
<keyword id="KW-0472">Membrane</keyword>
<keyword id="KW-0496">Mitochondrion</keyword>
<keyword id="KW-0520">NAD</keyword>
<keyword id="KW-0679">Respiratory chain</keyword>
<keyword id="KW-1278">Translocase</keyword>
<keyword id="KW-0812">Transmembrane</keyword>
<keyword id="KW-1133">Transmembrane helix</keyword>
<keyword id="KW-0813">Transport</keyword>
<keyword id="KW-0830">Ubiquinone</keyword>
<proteinExistence type="inferred from homology"/>
<dbReference type="EC" id="7.1.1.2"/>
<dbReference type="EMBL" id="X73913">
    <property type="protein sequence ID" value="CAA52118.1"/>
    <property type="molecule type" value="Genomic_DNA"/>
</dbReference>
<dbReference type="EMBL" id="S51781">
    <property type="protein sequence ID" value="AAB24770.1"/>
    <property type="molecule type" value="Genomic_DNA"/>
</dbReference>
<dbReference type="PIR" id="S62166">
    <property type="entry name" value="S62166"/>
</dbReference>
<dbReference type="SMR" id="P43207"/>
<dbReference type="GO" id="GO:0031966">
    <property type="term" value="C:mitochondrial membrane"/>
    <property type="evidence" value="ECO:0007669"/>
    <property type="project" value="UniProtKB-SubCell"/>
</dbReference>
<dbReference type="GO" id="GO:0008137">
    <property type="term" value="F:NADH dehydrogenase (ubiquinone) activity"/>
    <property type="evidence" value="ECO:0007669"/>
    <property type="project" value="UniProtKB-EC"/>
</dbReference>
<dbReference type="Gene3D" id="1.20.120.1200">
    <property type="entry name" value="NADH-ubiquinone/plastoquinone oxidoreductase chain 6, subunit NuoJ"/>
    <property type="match status" value="1"/>
</dbReference>
<dbReference type="InterPro" id="IPR050269">
    <property type="entry name" value="ComplexI_Subunit6"/>
</dbReference>
<dbReference type="InterPro" id="IPR001457">
    <property type="entry name" value="NADH_UbQ/plastoQ_OxRdtase_su6"/>
</dbReference>
<dbReference type="InterPro" id="IPR042106">
    <property type="entry name" value="Nuo/plastoQ_OxRdtase_6_NuoJ"/>
</dbReference>
<dbReference type="PANTHER" id="PTHR11435">
    <property type="entry name" value="NADH UBIQUINONE OXIDOREDUCTASE SUBUNIT ND6"/>
    <property type="match status" value="1"/>
</dbReference>
<dbReference type="PANTHER" id="PTHR11435:SF1">
    <property type="entry name" value="NADH-UBIQUINONE OXIDOREDUCTASE CHAIN 6"/>
    <property type="match status" value="1"/>
</dbReference>
<dbReference type="Pfam" id="PF00499">
    <property type="entry name" value="Oxidored_q3"/>
    <property type="match status" value="1"/>
</dbReference>
<gene>
    <name type="primary">MT-ND6</name>
    <name type="synonym">MTND6</name>
    <name type="synonym">NADH6</name>
    <name type="synonym">ND6</name>
</gene>
<protein>
    <recommendedName>
        <fullName>NADH-ubiquinone oxidoreductase chain 6</fullName>
        <ecNumber>7.1.1.2</ecNumber>
    </recommendedName>
    <alternativeName>
        <fullName>NADH dehydrogenase subunit 6</fullName>
    </alternativeName>
</protein>
<accession>P43207</accession>
<comment type="function">
    <text evidence="1">Core subunit of the mitochondrial membrane respiratory chain NADH dehydrogenase (Complex I) that is believed to belong to the minimal assembly required for catalysis. Complex I functions in the transfer of electrons from NADH to the respiratory chain. The immediate electron acceptor for the enzyme is believed to be ubiquinone (By similarity).</text>
</comment>
<comment type="catalytic activity">
    <reaction>
        <text>a ubiquinone + NADH + 5 H(+)(in) = a ubiquinol + NAD(+) + 4 H(+)(out)</text>
        <dbReference type="Rhea" id="RHEA:29091"/>
        <dbReference type="Rhea" id="RHEA-COMP:9565"/>
        <dbReference type="Rhea" id="RHEA-COMP:9566"/>
        <dbReference type="ChEBI" id="CHEBI:15378"/>
        <dbReference type="ChEBI" id="CHEBI:16389"/>
        <dbReference type="ChEBI" id="CHEBI:17976"/>
        <dbReference type="ChEBI" id="CHEBI:57540"/>
        <dbReference type="ChEBI" id="CHEBI:57945"/>
        <dbReference type="EC" id="7.1.1.2"/>
    </reaction>
</comment>
<comment type="subcellular location">
    <subcellularLocation>
        <location evidence="3">Mitochondrion membrane</location>
        <topology evidence="3">Multi-pass membrane protein</topology>
    </subcellularLocation>
</comment>
<comment type="similarity">
    <text evidence="3">Belongs to the complex I subunit 6 family.</text>
</comment>
<name>NU6M_URIAL</name>
<organism>
    <name type="scientific">Uria aalge</name>
    <name type="common">Common mure</name>
    <name type="synonym">Colymbus aalge</name>
    <dbReference type="NCBI Taxonomy" id="13746"/>
    <lineage>
        <taxon>Eukaryota</taxon>
        <taxon>Metazoa</taxon>
        <taxon>Chordata</taxon>
        <taxon>Craniata</taxon>
        <taxon>Vertebrata</taxon>
        <taxon>Euteleostomi</taxon>
        <taxon>Archelosauria</taxon>
        <taxon>Archosauria</taxon>
        <taxon>Dinosauria</taxon>
        <taxon>Saurischia</taxon>
        <taxon>Theropoda</taxon>
        <taxon>Coelurosauria</taxon>
        <taxon>Aves</taxon>
        <taxon>Neognathae</taxon>
        <taxon>Neoaves</taxon>
        <taxon>Charadriiformes</taxon>
        <taxon>Alcidae</taxon>
        <taxon>Uria</taxon>
    </lineage>
</organism>
<geneLocation type="mitochondrion"/>
<feature type="chain" id="PRO_0000118344" description="NADH-ubiquinone oxidoreductase chain 6">
    <location>
        <begin position="1"/>
        <end position="172"/>
    </location>
</feature>
<feature type="transmembrane region" description="Helical" evidence="2">
    <location>
        <begin position="1"/>
        <end position="21"/>
    </location>
</feature>
<feature type="transmembrane region" description="Helical" evidence="2">
    <location>
        <begin position="27"/>
        <end position="47"/>
    </location>
</feature>
<feature type="transmembrane region" description="Helical" evidence="2">
    <location>
        <begin position="48"/>
        <end position="68"/>
    </location>
</feature>
<feature type="transmembrane region" description="Helical" evidence="2">
    <location>
        <begin position="87"/>
        <end position="107"/>
    </location>
</feature>
<feature type="transmembrane region" description="Helical" evidence="2">
    <location>
        <begin position="138"/>
        <end position="158"/>
    </location>
</feature>
<reference key="1">
    <citation type="journal article" date="1994" name="Curr. Genet.">
        <title>Intragenic rearrangements in the mitochondrial NADH dehydrogenase subunit 6 gene of vertebrates.</title>
        <authorList>
            <person name="Moum T."/>
            <person name="Willassen N.P."/>
            <person name="Johansen S."/>
        </authorList>
    </citation>
    <scope>NUCLEOTIDE SEQUENCE [GENOMIC DNA]</scope>
</reference>
<reference key="2">
    <citation type="journal article" date="1992" name="Genome">
        <title>The mitochondrial NADH dehydrogenase subunit 6 (ND6) gene in Murres: relevance to phylogenetic and population studies among birds.</title>
        <authorList>
            <person name="Moum T."/>
            <person name="Johansen S."/>
        </authorList>
    </citation>
    <scope>NUCLEOTIDE SEQUENCE [GENOMIC DNA]</scope>
</reference>
<sequence length="172" mass="18099">MTYFVLFLGLCFVLGGLAVASNPSPYYGVVGLVLASVAGCGWLLSLGISFVSLVLFMVYLGGMLVVFVYSVSLAADPFPEAWGDWRVVGYGMGFVAVLVAGVVVGGFECWDLGMVTVDSVGMFSVRLDFGGVAMFYSCGVGMFLAAGWGLLLTLFVVLELVRGLTRGAIRAV</sequence>